<feature type="chain" id="PRO_0000310706" description="Succinate-semialdehyde dehydrogenase [NADP(+)] 1">
    <location>
        <begin position="1"/>
        <end position="457"/>
    </location>
</feature>
<feature type="active site" description="Proton acceptor" evidence="2">
    <location>
        <position position="231"/>
    </location>
</feature>
<feature type="active site" description="Nucleophile" evidence="2">
    <location>
        <position position="265"/>
    </location>
</feature>
<feature type="binding site" evidence="1">
    <location>
        <begin position="133"/>
        <end position="134"/>
    </location>
    <ligand>
        <name>NADP(+)</name>
        <dbReference type="ChEBI" id="CHEBI:58349"/>
    </ligand>
</feature>
<feature type="binding site" evidence="1">
    <location>
        <begin position="157"/>
        <end position="160"/>
    </location>
    <ligand>
        <name>NADP(+)</name>
        <dbReference type="ChEBI" id="CHEBI:58349"/>
    </ligand>
</feature>
<feature type="binding site" evidence="1">
    <location>
        <begin position="209"/>
        <end position="210"/>
    </location>
    <ligand>
        <name>NADP(+)</name>
        <dbReference type="ChEBI" id="CHEBI:58349"/>
    </ligand>
</feature>
<feature type="binding site" evidence="1">
    <location>
        <position position="232"/>
    </location>
    <ligand>
        <name>NADP(+)</name>
        <dbReference type="ChEBI" id="CHEBI:58349"/>
    </ligand>
</feature>
<feature type="binding site" evidence="1">
    <location>
        <position position="362"/>
    </location>
    <ligand>
        <name>NADP(+)</name>
        <dbReference type="ChEBI" id="CHEBI:58349"/>
    </ligand>
</feature>
<name>GABD1_MYCTA</name>
<dbReference type="EC" id="1.2.1.79"/>
<dbReference type="EMBL" id="CP000611">
    <property type="protein sequence ID" value="ABQ71959.1"/>
    <property type="status" value="ALT_INIT"/>
    <property type="molecule type" value="Genomic_DNA"/>
</dbReference>
<dbReference type="RefSeq" id="WP_003912534.1">
    <property type="nucleotide sequence ID" value="NZ_CP016972.1"/>
</dbReference>
<dbReference type="SMR" id="A5TYV9"/>
<dbReference type="KEGG" id="mra:MRA_0242"/>
<dbReference type="eggNOG" id="COG1012">
    <property type="taxonomic scope" value="Bacteria"/>
</dbReference>
<dbReference type="HOGENOM" id="CLU_005391_1_0_11"/>
<dbReference type="Proteomes" id="UP000001988">
    <property type="component" value="Chromosome"/>
</dbReference>
<dbReference type="GO" id="GO:0004030">
    <property type="term" value="F:aldehyde dehydrogenase [NAD(P)+] activity"/>
    <property type="evidence" value="ECO:0007669"/>
    <property type="project" value="InterPro"/>
</dbReference>
<dbReference type="GO" id="GO:0004777">
    <property type="term" value="F:succinate-semialdehyde dehydrogenase (NAD+) activity"/>
    <property type="evidence" value="ECO:0007669"/>
    <property type="project" value="TreeGrafter"/>
</dbReference>
<dbReference type="GO" id="GO:0036243">
    <property type="term" value="F:succinate-semialdehyde dehydrogenase (NADP+) activity"/>
    <property type="evidence" value="ECO:0007669"/>
    <property type="project" value="UniProtKB-EC"/>
</dbReference>
<dbReference type="GO" id="GO:0006099">
    <property type="term" value="P:tricarboxylic acid cycle"/>
    <property type="evidence" value="ECO:0007669"/>
    <property type="project" value="UniProtKB-KW"/>
</dbReference>
<dbReference type="CDD" id="cd07100">
    <property type="entry name" value="ALDH_SSADH1_GabD1"/>
    <property type="match status" value="1"/>
</dbReference>
<dbReference type="FunFam" id="3.40.309.10:FF:000010">
    <property type="entry name" value="Gamma-aminobutyraldehyde dehydrogenase"/>
    <property type="match status" value="1"/>
</dbReference>
<dbReference type="FunFam" id="3.40.605.10:FF:000012">
    <property type="entry name" value="NAD-dependent succinate-semialdehyde dehydrogenase"/>
    <property type="match status" value="1"/>
</dbReference>
<dbReference type="Gene3D" id="3.40.605.10">
    <property type="entry name" value="Aldehyde Dehydrogenase, Chain A, domain 1"/>
    <property type="match status" value="1"/>
</dbReference>
<dbReference type="Gene3D" id="3.40.309.10">
    <property type="entry name" value="Aldehyde Dehydrogenase, Chain A, domain 2"/>
    <property type="match status" value="1"/>
</dbReference>
<dbReference type="InterPro" id="IPR016161">
    <property type="entry name" value="Ald_DH/histidinol_DH"/>
</dbReference>
<dbReference type="InterPro" id="IPR016163">
    <property type="entry name" value="Ald_DH_C"/>
</dbReference>
<dbReference type="InterPro" id="IPR016160">
    <property type="entry name" value="Ald_DH_CS_CYS"/>
</dbReference>
<dbReference type="InterPro" id="IPR016162">
    <property type="entry name" value="Ald_DH_N"/>
</dbReference>
<dbReference type="InterPro" id="IPR015590">
    <property type="entry name" value="Aldehyde_DH_dom"/>
</dbReference>
<dbReference type="InterPro" id="IPR044148">
    <property type="entry name" value="ALDH_GabD1-like"/>
</dbReference>
<dbReference type="InterPro" id="IPR047110">
    <property type="entry name" value="GABD/Sad-like"/>
</dbReference>
<dbReference type="NCBIfam" id="NF006915">
    <property type="entry name" value="PRK09406.1"/>
    <property type="match status" value="1"/>
</dbReference>
<dbReference type="PANTHER" id="PTHR43217">
    <property type="entry name" value="SUCCINATE SEMIALDEHYDE DEHYDROGENASE [NAD(P)+] SAD"/>
    <property type="match status" value="1"/>
</dbReference>
<dbReference type="PANTHER" id="PTHR43217:SF1">
    <property type="entry name" value="SUCCINATE SEMIALDEHYDE DEHYDROGENASE [NAD(P)+] SAD"/>
    <property type="match status" value="1"/>
</dbReference>
<dbReference type="Pfam" id="PF00171">
    <property type="entry name" value="Aldedh"/>
    <property type="match status" value="1"/>
</dbReference>
<dbReference type="SUPFAM" id="SSF53720">
    <property type="entry name" value="ALDH-like"/>
    <property type="match status" value="1"/>
</dbReference>
<dbReference type="PROSITE" id="PS00070">
    <property type="entry name" value="ALDEHYDE_DEHYDR_CYS"/>
    <property type="match status" value="1"/>
</dbReference>
<gene>
    <name type="primary">gabD1</name>
    <name type="ordered locus">MRA_0242</name>
</gene>
<evidence type="ECO:0000250" key="1"/>
<evidence type="ECO:0000255" key="2">
    <source>
        <dbReference type="PROSITE-ProRule" id="PRU10008"/>
    </source>
</evidence>
<evidence type="ECO:0000305" key="3"/>
<sequence>MPIATINPATGETVKTFTAATDDEVDAAIARAHRRFADYRQTSFAQRARWANATADLLEAEADQAAAMMTLEMGKTLAAAKAEALKCAKGFRYYAENAEALLADEPADAAKVGASAAYGRYQPLGVILAVMPWNFPLWQAVRFAAPALMAGNVGLLKHASNVPQCALYLADVIARGGFPDGCFQTLLVSSGAVEAILRDPRVAAATLTGSEPAGQSVGAIAGNEIKPTVLELGGSDPFIVMPSADLDAAVSTAVTGRVQNNGQSCIAAKRFIVHADIYDDFVDKFVARMAALRVGDPTDPDTDVGPLATEQGRNEVAKQVEDAAAAGAVIRCGGKRLDRPGWFYPPTVITDISKDMALYTEEVFGPVASVFRAANIDEAVEIANATTFGLGSNAWTRDETEQRRFIDDIVAGQVFINGMTVSYPELPFGGVKRSGYGRELSAHGIREFCNIKTVWIA</sequence>
<organism>
    <name type="scientific">Mycobacterium tuberculosis (strain ATCC 25177 / H37Ra)</name>
    <dbReference type="NCBI Taxonomy" id="419947"/>
    <lineage>
        <taxon>Bacteria</taxon>
        <taxon>Bacillati</taxon>
        <taxon>Actinomycetota</taxon>
        <taxon>Actinomycetes</taxon>
        <taxon>Mycobacteriales</taxon>
        <taxon>Mycobacteriaceae</taxon>
        <taxon>Mycobacterium</taxon>
        <taxon>Mycobacterium tuberculosis complex</taxon>
    </lineage>
</organism>
<reference key="1">
    <citation type="journal article" date="2008" name="PLoS ONE">
        <title>Genetic basis of virulence attenuation revealed by comparative genomic analysis of Mycobacterium tuberculosis strain H37Ra versus H37Rv.</title>
        <authorList>
            <person name="Zheng H."/>
            <person name="Lu L."/>
            <person name="Wang B."/>
            <person name="Pu S."/>
            <person name="Zhang X."/>
            <person name="Zhu G."/>
            <person name="Shi W."/>
            <person name="Zhang L."/>
            <person name="Wang H."/>
            <person name="Wang S."/>
            <person name="Zhao G."/>
            <person name="Zhang Y."/>
        </authorList>
    </citation>
    <scope>NUCLEOTIDE SEQUENCE [LARGE SCALE GENOMIC DNA]</scope>
    <source>
        <strain>ATCC 25177 / H37Ra</strain>
    </source>
</reference>
<keyword id="KW-0521">NADP</keyword>
<keyword id="KW-0560">Oxidoreductase</keyword>
<keyword id="KW-1185">Reference proteome</keyword>
<keyword id="KW-0816">Tricarboxylic acid cycle</keyword>
<proteinExistence type="inferred from homology"/>
<comment type="function">
    <text evidence="1">Catalyzes the NADP(+)-dependent oxidation of succinate semialdehyde to succinate. It is believed to be the main source of succinate semialdehyde dehydrogenase activity in Mycobacterium (By similarity).</text>
</comment>
<comment type="catalytic activity">
    <reaction>
        <text>succinate semialdehyde + NADP(+) + H2O = succinate + NADPH + 2 H(+)</text>
        <dbReference type="Rhea" id="RHEA:13213"/>
        <dbReference type="ChEBI" id="CHEBI:15377"/>
        <dbReference type="ChEBI" id="CHEBI:15378"/>
        <dbReference type="ChEBI" id="CHEBI:30031"/>
        <dbReference type="ChEBI" id="CHEBI:57706"/>
        <dbReference type="ChEBI" id="CHEBI:57783"/>
        <dbReference type="ChEBI" id="CHEBI:58349"/>
        <dbReference type="EC" id="1.2.1.79"/>
    </reaction>
</comment>
<comment type="similarity">
    <text evidence="3">Belongs to the aldehyde dehydrogenase family.</text>
</comment>
<comment type="sequence caution" evidence="3">
    <conflict type="erroneous initiation">
        <sequence resource="EMBL-CDS" id="ABQ71959"/>
    </conflict>
</comment>
<protein>
    <recommendedName>
        <fullName>Succinate-semialdehyde dehydrogenase [NADP(+)] 1</fullName>
        <shortName>SSADH 1</shortName>
        <shortName>SSDH 1</shortName>
        <ecNumber>1.2.1.79</ecNumber>
    </recommendedName>
</protein>
<accession>A5TYV9</accession>